<organism>
    <name type="scientific">Synechococcus elongatus (strain ATCC 33912 / PCC 7942 / FACHB-805)</name>
    <name type="common">Anacystis nidulans R2</name>
    <dbReference type="NCBI Taxonomy" id="1140"/>
    <lineage>
        <taxon>Bacteria</taxon>
        <taxon>Bacillati</taxon>
        <taxon>Cyanobacteriota</taxon>
        <taxon>Cyanophyceae</taxon>
        <taxon>Synechococcales</taxon>
        <taxon>Synechococcaceae</taxon>
        <taxon>Synechococcus</taxon>
    </lineage>
</organism>
<name>PSBF_SYNE7</name>
<sequence>MTSNNSNQPITYPIFTVRWLSVHALGVPSVFFLGAIAAMQFIQR</sequence>
<gene>
    <name evidence="1" type="primary">psbF</name>
    <name type="ordered locus">Synpcc7942_1176</name>
    <name type="ORF">see0053</name>
</gene>
<evidence type="ECO:0000255" key="1">
    <source>
        <dbReference type="HAMAP-Rule" id="MF_00643"/>
    </source>
</evidence>
<accession>Q8KPP2</accession>
<accession>Q31P13</accession>
<dbReference type="EMBL" id="AY120853">
    <property type="protein sequence ID" value="AAM82728.1"/>
    <property type="molecule type" value="Genomic_DNA"/>
</dbReference>
<dbReference type="EMBL" id="CP000100">
    <property type="protein sequence ID" value="ABB57206.1"/>
    <property type="molecule type" value="Genomic_DNA"/>
</dbReference>
<dbReference type="RefSeq" id="WP_011242686.1">
    <property type="nucleotide sequence ID" value="NZ_JACJTX010000003.1"/>
</dbReference>
<dbReference type="SMR" id="Q8KPP2"/>
<dbReference type="STRING" id="1140.Synpcc7942_1176"/>
<dbReference type="TCDB" id="3.E.2.2.1">
    <property type="family name" value="the photosynthetic reaction center (prc) family"/>
</dbReference>
<dbReference type="PaxDb" id="1140-Synpcc7942_1176"/>
<dbReference type="GeneID" id="72430034"/>
<dbReference type="KEGG" id="syf:Synpcc7942_1176"/>
<dbReference type="eggNOG" id="ENOG50332KX">
    <property type="taxonomic scope" value="Bacteria"/>
</dbReference>
<dbReference type="HOGENOM" id="CLU_211753_1_0_3"/>
<dbReference type="OrthoDB" id="532613at2"/>
<dbReference type="BioCyc" id="MetaCyc:SYNPCC7942_1176-MONOMER"/>
<dbReference type="BioCyc" id="SYNEL:SYNPCC7942_1176-MONOMER"/>
<dbReference type="Proteomes" id="UP000889800">
    <property type="component" value="Chromosome"/>
</dbReference>
<dbReference type="GO" id="GO:0009539">
    <property type="term" value="C:photosystem II reaction center"/>
    <property type="evidence" value="ECO:0007669"/>
    <property type="project" value="InterPro"/>
</dbReference>
<dbReference type="GO" id="GO:0031676">
    <property type="term" value="C:plasma membrane-derived thylakoid membrane"/>
    <property type="evidence" value="ECO:0007669"/>
    <property type="project" value="UniProtKB-SubCell"/>
</dbReference>
<dbReference type="GO" id="GO:0009055">
    <property type="term" value="F:electron transfer activity"/>
    <property type="evidence" value="ECO:0007669"/>
    <property type="project" value="UniProtKB-UniRule"/>
</dbReference>
<dbReference type="GO" id="GO:0020037">
    <property type="term" value="F:heme binding"/>
    <property type="evidence" value="ECO:0007669"/>
    <property type="project" value="InterPro"/>
</dbReference>
<dbReference type="GO" id="GO:0005506">
    <property type="term" value="F:iron ion binding"/>
    <property type="evidence" value="ECO:0007669"/>
    <property type="project" value="UniProtKB-UniRule"/>
</dbReference>
<dbReference type="GO" id="GO:0009767">
    <property type="term" value="P:photosynthetic electron transport chain"/>
    <property type="evidence" value="ECO:0007669"/>
    <property type="project" value="InterPro"/>
</dbReference>
<dbReference type="HAMAP" id="MF_00643">
    <property type="entry name" value="PSII_PsbF"/>
    <property type="match status" value="1"/>
</dbReference>
<dbReference type="InterPro" id="IPR006241">
    <property type="entry name" value="PSII_cyt_b559_bsu"/>
</dbReference>
<dbReference type="InterPro" id="IPR006216">
    <property type="entry name" value="PSII_cyt_b559_CS"/>
</dbReference>
<dbReference type="InterPro" id="IPR013081">
    <property type="entry name" value="PSII_cyt_b559_N"/>
</dbReference>
<dbReference type="NCBIfam" id="TIGR01333">
    <property type="entry name" value="cyt_b559_beta"/>
    <property type="match status" value="1"/>
</dbReference>
<dbReference type="Pfam" id="PF00283">
    <property type="entry name" value="Cytochrom_B559"/>
    <property type="match status" value="1"/>
</dbReference>
<dbReference type="PIRSF" id="PIRSF000037">
    <property type="entry name" value="PsbF"/>
    <property type="match status" value="1"/>
</dbReference>
<dbReference type="SUPFAM" id="SSF161045">
    <property type="entry name" value="Cytochrome b559 subunits"/>
    <property type="match status" value="1"/>
</dbReference>
<dbReference type="PROSITE" id="PS00537">
    <property type="entry name" value="CYTOCHROME_B559"/>
    <property type="match status" value="1"/>
</dbReference>
<comment type="function">
    <text evidence="1">This b-type cytochrome is tightly associated with the reaction center of photosystem II (PSII). PSII is a light-driven water:plastoquinone oxidoreductase that uses light energy to abstract electrons from H(2)O, generating O(2) and a proton gradient subsequently used for ATP formation. It consists of a core antenna complex that captures photons, and an electron transfer chain that converts photonic excitation into a charge separation.</text>
</comment>
<comment type="cofactor">
    <cofactor evidence="1">
        <name>heme b</name>
        <dbReference type="ChEBI" id="CHEBI:60344"/>
    </cofactor>
    <text evidence="1">With its partner (PsbE) binds heme. PSII binds additional chlorophylls, carotenoids and specific lipids.</text>
</comment>
<comment type="subunit">
    <text evidence="1">Heterodimer of an alpha subunit and a beta subunit. PSII is composed of 1 copy each of membrane proteins PsbA, PsbB, PsbC, PsbD, PsbE, PsbF, PsbH, PsbI, PsbJ, PsbK, PsbL, PsbM, PsbT, PsbX, PsbY, PsbZ, Psb30/Ycf12, peripheral proteins PsbO, CyanoQ (PsbQ), PsbU, PsbV and a large number of cofactors. It forms dimeric complexes.</text>
</comment>
<comment type="subcellular location">
    <subcellularLocation>
        <location evidence="1">Cellular thylakoid membrane</location>
        <topology evidence="1">Single-pass membrane protein</topology>
    </subcellularLocation>
</comment>
<comment type="similarity">
    <text evidence="1">Belongs to the PsbE/PsbF family.</text>
</comment>
<feature type="chain" id="PRO_0000200475" description="Cytochrome b559 subunit beta">
    <location>
        <begin position="1"/>
        <end position="44"/>
    </location>
</feature>
<feature type="transmembrane region" description="Helical" evidence="1">
    <location>
        <begin position="19"/>
        <end position="35"/>
    </location>
</feature>
<feature type="binding site" description="axial binding residue" evidence="1">
    <location>
        <position position="23"/>
    </location>
    <ligand>
        <name>heme</name>
        <dbReference type="ChEBI" id="CHEBI:30413"/>
        <note>ligand shared with alpha subunit</note>
    </ligand>
    <ligandPart>
        <name>Fe</name>
        <dbReference type="ChEBI" id="CHEBI:18248"/>
    </ligandPart>
</feature>
<reference key="1">
    <citation type="submission" date="2002-06" db="EMBL/GenBank/DDBJ databases">
        <title>Synechococcus elongatus PCC7942 cosmid 7G3.</title>
        <authorList>
            <person name="Holtman C.K."/>
            <person name="Sandoval P."/>
            <person name="Chen Y."/>
            <person name="Socias T."/>
            <person name="Mohler B.J."/>
            <person name="McMurtry S."/>
            <person name="Gonzalez A."/>
            <person name="Salinas I."/>
            <person name="Golden S.S."/>
            <person name="Youderian P."/>
        </authorList>
    </citation>
    <scope>NUCLEOTIDE SEQUENCE [GENOMIC DNA]</scope>
</reference>
<reference key="2">
    <citation type="submission" date="2005-08" db="EMBL/GenBank/DDBJ databases">
        <title>Complete sequence of chromosome 1 of Synechococcus elongatus PCC 7942.</title>
        <authorList>
            <consortium name="US DOE Joint Genome Institute"/>
            <person name="Copeland A."/>
            <person name="Lucas S."/>
            <person name="Lapidus A."/>
            <person name="Barry K."/>
            <person name="Detter J.C."/>
            <person name="Glavina T."/>
            <person name="Hammon N."/>
            <person name="Israni S."/>
            <person name="Pitluck S."/>
            <person name="Schmutz J."/>
            <person name="Larimer F."/>
            <person name="Land M."/>
            <person name="Kyrpides N."/>
            <person name="Lykidis A."/>
            <person name="Golden S."/>
            <person name="Richardson P."/>
        </authorList>
    </citation>
    <scope>NUCLEOTIDE SEQUENCE [LARGE SCALE GENOMIC DNA]</scope>
    <source>
        <strain>ATCC 33912 / PCC 7942 / FACHB-805</strain>
    </source>
</reference>
<proteinExistence type="inferred from homology"/>
<keyword id="KW-0249">Electron transport</keyword>
<keyword id="KW-0349">Heme</keyword>
<keyword id="KW-0408">Iron</keyword>
<keyword id="KW-0472">Membrane</keyword>
<keyword id="KW-0479">Metal-binding</keyword>
<keyword id="KW-0602">Photosynthesis</keyword>
<keyword id="KW-0604">Photosystem II</keyword>
<keyword id="KW-1185">Reference proteome</keyword>
<keyword id="KW-0793">Thylakoid</keyword>
<keyword id="KW-0812">Transmembrane</keyword>
<keyword id="KW-1133">Transmembrane helix</keyword>
<keyword id="KW-0813">Transport</keyword>
<protein>
    <recommendedName>
        <fullName evidence="1">Cytochrome b559 subunit beta</fullName>
    </recommendedName>
    <alternativeName>
        <fullName evidence="1">PSII reaction center subunit VI</fullName>
    </alternativeName>
</protein>